<keyword id="KW-0028">Amino-acid biosynthesis</keyword>
<keyword id="KW-0963">Cytoplasm</keyword>
<keyword id="KW-0413">Isomerase</keyword>
<keyword id="KW-0457">Lysine biosynthesis</keyword>
<organism>
    <name type="scientific">Ralstonia pickettii (strain 12J)</name>
    <dbReference type="NCBI Taxonomy" id="402626"/>
    <lineage>
        <taxon>Bacteria</taxon>
        <taxon>Pseudomonadati</taxon>
        <taxon>Pseudomonadota</taxon>
        <taxon>Betaproteobacteria</taxon>
        <taxon>Burkholderiales</taxon>
        <taxon>Burkholderiaceae</taxon>
        <taxon>Ralstonia</taxon>
    </lineage>
</organism>
<evidence type="ECO:0000255" key="1">
    <source>
        <dbReference type="HAMAP-Rule" id="MF_00197"/>
    </source>
</evidence>
<sequence length="292" mass="31627">MKLHFTKMHGAGNDFVVLDGIQTPIDFTPEQWAAIADRHFGVGADQLLLVERSTRPDVDFRYRIFNHDGGEVEHCGNGARCFVKFVTDRGLTDKRTVRVEVMNGIATLTMQDDGQVTVDMGAPVFEAARLPFLPEGLPTRTQGDDTQHALQINGRTEWLSTVSMGNPHAVQIVDDTEAFPVLEDGPLIESHAVFPRRVNAGFMQIVDRHSVRLRVYERGAGETLACGTGACAAVVAGIRRGLLDSPVKVATHGGDLTIAWAGDGQPVMMTGPATTVFEGTLDLDALKLTAAH</sequence>
<reference key="1">
    <citation type="submission" date="2008-05" db="EMBL/GenBank/DDBJ databases">
        <title>Complete sequence of chromosome 1 of Ralstonia pickettii 12J.</title>
        <authorList>
            <person name="Lucas S."/>
            <person name="Copeland A."/>
            <person name="Lapidus A."/>
            <person name="Glavina del Rio T."/>
            <person name="Dalin E."/>
            <person name="Tice H."/>
            <person name="Bruce D."/>
            <person name="Goodwin L."/>
            <person name="Pitluck S."/>
            <person name="Meincke L."/>
            <person name="Brettin T."/>
            <person name="Detter J.C."/>
            <person name="Han C."/>
            <person name="Kuske C.R."/>
            <person name="Schmutz J."/>
            <person name="Larimer F."/>
            <person name="Land M."/>
            <person name="Hauser L."/>
            <person name="Kyrpides N."/>
            <person name="Mikhailova N."/>
            <person name="Marsh T."/>
            <person name="Richardson P."/>
        </authorList>
    </citation>
    <scope>NUCLEOTIDE SEQUENCE [LARGE SCALE GENOMIC DNA]</scope>
    <source>
        <strain>12J</strain>
    </source>
</reference>
<dbReference type="EC" id="5.1.1.7" evidence="1"/>
<dbReference type="EMBL" id="CP001068">
    <property type="protein sequence ID" value="ACD25204.1"/>
    <property type="molecule type" value="Genomic_DNA"/>
</dbReference>
<dbReference type="SMR" id="B2UD25"/>
<dbReference type="STRING" id="402626.Rpic_0039"/>
<dbReference type="KEGG" id="rpi:Rpic_0039"/>
<dbReference type="eggNOG" id="COG0253">
    <property type="taxonomic scope" value="Bacteria"/>
</dbReference>
<dbReference type="HOGENOM" id="CLU_053306_1_1_4"/>
<dbReference type="UniPathway" id="UPA00034">
    <property type="reaction ID" value="UER00025"/>
</dbReference>
<dbReference type="GO" id="GO:0005829">
    <property type="term" value="C:cytosol"/>
    <property type="evidence" value="ECO:0007669"/>
    <property type="project" value="TreeGrafter"/>
</dbReference>
<dbReference type="GO" id="GO:0008837">
    <property type="term" value="F:diaminopimelate epimerase activity"/>
    <property type="evidence" value="ECO:0007669"/>
    <property type="project" value="UniProtKB-UniRule"/>
</dbReference>
<dbReference type="GO" id="GO:0009089">
    <property type="term" value="P:lysine biosynthetic process via diaminopimelate"/>
    <property type="evidence" value="ECO:0007669"/>
    <property type="project" value="UniProtKB-UniRule"/>
</dbReference>
<dbReference type="FunFam" id="3.10.310.10:FF:000001">
    <property type="entry name" value="Diaminopimelate epimerase"/>
    <property type="match status" value="1"/>
</dbReference>
<dbReference type="Gene3D" id="3.10.310.10">
    <property type="entry name" value="Diaminopimelate Epimerase, Chain A, domain 1"/>
    <property type="match status" value="2"/>
</dbReference>
<dbReference type="HAMAP" id="MF_00197">
    <property type="entry name" value="DAP_epimerase"/>
    <property type="match status" value="1"/>
</dbReference>
<dbReference type="InterPro" id="IPR018510">
    <property type="entry name" value="DAP_epimerase_AS"/>
</dbReference>
<dbReference type="InterPro" id="IPR001653">
    <property type="entry name" value="DAP_epimerase_DapF"/>
</dbReference>
<dbReference type="NCBIfam" id="TIGR00652">
    <property type="entry name" value="DapF"/>
    <property type="match status" value="1"/>
</dbReference>
<dbReference type="PANTHER" id="PTHR31689:SF0">
    <property type="entry name" value="DIAMINOPIMELATE EPIMERASE"/>
    <property type="match status" value="1"/>
</dbReference>
<dbReference type="PANTHER" id="PTHR31689">
    <property type="entry name" value="DIAMINOPIMELATE EPIMERASE, CHLOROPLASTIC"/>
    <property type="match status" value="1"/>
</dbReference>
<dbReference type="Pfam" id="PF01678">
    <property type="entry name" value="DAP_epimerase"/>
    <property type="match status" value="2"/>
</dbReference>
<dbReference type="SUPFAM" id="SSF54506">
    <property type="entry name" value="Diaminopimelate epimerase-like"/>
    <property type="match status" value="1"/>
</dbReference>
<dbReference type="PROSITE" id="PS01326">
    <property type="entry name" value="DAP_EPIMERASE"/>
    <property type="match status" value="1"/>
</dbReference>
<comment type="function">
    <text evidence="1">Catalyzes the stereoinversion of LL-2,6-diaminopimelate (L,L-DAP) to meso-diaminopimelate (meso-DAP), a precursor of L-lysine and an essential component of the bacterial peptidoglycan.</text>
</comment>
<comment type="catalytic activity">
    <reaction evidence="1">
        <text>(2S,6S)-2,6-diaminopimelate = meso-2,6-diaminopimelate</text>
        <dbReference type="Rhea" id="RHEA:15393"/>
        <dbReference type="ChEBI" id="CHEBI:57609"/>
        <dbReference type="ChEBI" id="CHEBI:57791"/>
        <dbReference type="EC" id="5.1.1.7"/>
    </reaction>
</comment>
<comment type="pathway">
    <text evidence="1">Amino-acid biosynthesis; L-lysine biosynthesis via DAP pathway; DL-2,6-diaminopimelate from LL-2,6-diaminopimelate: step 1/1.</text>
</comment>
<comment type="subunit">
    <text evidence="1">Homodimer.</text>
</comment>
<comment type="subcellular location">
    <subcellularLocation>
        <location evidence="1">Cytoplasm</location>
    </subcellularLocation>
</comment>
<comment type="similarity">
    <text evidence="1">Belongs to the diaminopimelate epimerase family.</text>
</comment>
<proteinExistence type="inferred from homology"/>
<feature type="chain" id="PRO_1000099258" description="Diaminopimelate epimerase">
    <location>
        <begin position="1"/>
        <end position="292"/>
    </location>
</feature>
<feature type="active site" description="Proton donor" evidence="1">
    <location>
        <position position="75"/>
    </location>
</feature>
<feature type="active site" description="Proton acceptor" evidence="1">
    <location>
        <position position="226"/>
    </location>
</feature>
<feature type="binding site" evidence="1">
    <location>
        <position position="13"/>
    </location>
    <ligand>
        <name>substrate</name>
    </ligand>
</feature>
<feature type="binding site" evidence="1">
    <location>
        <position position="46"/>
    </location>
    <ligand>
        <name>substrate</name>
    </ligand>
</feature>
<feature type="binding site" evidence="1">
    <location>
        <position position="66"/>
    </location>
    <ligand>
        <name>substrate</name>
    </ligand>
</feature>
<feature type="binding site" evidence="1">
    <location>
        <begin position="76"/>
        <end position="77"/>
    </location>
    <ligand>
        <name>substrate</name>
    </ligand>
</feature>
<feature type="binding site" evidence="1">
    <location>
        <position position="166"/>
    </location>
    <ligand>
        <name>substrate</name>
    </ligand>
</feature>
<feature type="binding site" evidence="1">
    <location>
        <position position="199"/>
    </location>
    <ligand>
        <name>substrate</name>
    </ligand>
</feature>
<feature type="binding site" evidence="1">
    <location>
        <begin position="217"/>
        <end position="218"/>
    </location>
    <ligand>
        <name>substrate</name>
    </ligand>
</feature>
<feature type="binding site" evidence="1">
    <location>
        <begin position="227"/>
        <end position="228"/>
    </location>
    <ligand>
        <name>substrate</name>
    </ligand>
</feature>
<feature type="site" description="Could be important to modulate the pK values of the two catalytic cysteine residues" evidence="1">
    <location>
        <position position="168"/>
    </location>
</feature>
<feature type="site" description="Could be important to modulate the pK values of the two catalytic cysteine residues" evidence="1">
    <location>
        <position position="217"/>
    </location>
</feature>
<protein>
    <recommendedName>
        <fullName evidence="1">Diaminopimelate epimerase</fullName>
        <shortName evidence="1">DAP epimerase</shortName>
        <ecNumber evidence="1">5.1.1.7</ecNumber>
    </recommendedName>
    <alternativeName>
        <fullName evidence="1">PLP-independent amino acid racemase</fullName>
    </alternativeName>
</protein>
<gene>
    <name evidence="1" type="primary">dapF</name>
    <name type="ordered locus">Rpic_0039</name>
</gene>
<name>DAPF_RALPJ</name>
<accession>B2UD25</accession>